<comment type="function">
    <text evidence="1">One of the primary rRNA binding proteins, it binds directly near the 3'-end of the 23S rRNA, where it nucleates assembly of the 50S subunit.</text>
</comment>
<comment type="subunit">
    <text evidence="1">Part of the 50S ribosomal subunit. Forms a cluster with proteins L14 and L19.</text>
</comment>
<comment type="similarity">
    <text evidence="1">Belongs to the universal ribosomal protein uL3 family.</text>
</comment>
<proteinExistence type="inferred from homology"/>
<organism>
    <name type="scientific">Prochlorococcus marinus (strain MIT 9515)</name>
    <dbReference type="NCBI Taxonomy" id="167542"/>
    <lineage>
        <taxon>Bacteria</taxon>
        <taxon>Bacillati</taxon>
        <taxon>Cyanobacteriota</taxon>
        <taxon>Cyanophyceae</taxon>
        <taxon>Synechococcales</taxon>
        <taxon>Prochlorococcaceae</taxon>
        <taxon>Prochlorococcus</taxon>
    </lineage>
</organism>
<feature type="chain" id="PRO_1000052109" description="Large ribosomal subunit protein uL3">
    <location>
        <begin position="1"/>
        <end position="217"/>
    </location>
</feature>
<feature type="region of interest" description="Disordered" evidence="2">
    <location>
        <begin position="129"/>
        <end position="161"/>
    </location>
</feature>
<feature type="compositionally biased region" description="Low complexity" evidence="2">
    <location>
        <begin position="142"/>
        <end position="153"/>
    </location>
</feature>
<reference key="1">
    <citation type="journal article" date="2007" name="PLoS Genet.">
        <title>Patterns and implications of gene gain and loss in the evolution of Prochlorococcus.</title>
        <authorList>
            <person name="Kettler G.C."/>
            <person name="Martiny A.C."/>
            <person name="Huang K."/>
            <person name="Zucker J."/>
            <person name="Coleman M.L."/>
            <person name="Rodrigue S."/>
            <person name="Chen F."/>
            <person name="Lapidus A."/>
            <person name="Ferriera S."/>
            <person name="Johnson J."/>
            <person name="Steglich C."/>
            <person name="Church G.M."/>
            <person name="Richardson P."/>
            <person name="Chisholm S.W."/>
        </authorList>
    </citation>
    <scope>NUCLEOTIDE SEQUENCE [LARGE SCALE GENOMIC DNA]</scope>
    <source>
        <strain>MIT 9515</strain>
    </source>
</reference>
<gene>
    <name evidence="1" type="primary">rplC</name>
    <name evidence="1" type="synonym">rpl3</name>
    <name type="ordered locus">P9515_17401</name>
</gene>
<sequence>MSIGILGKKLGMSQLFDDDGNAVPVTLIEAGPCRVTQLKTQSLDGYTAIQIGYGVSKDKHLSKPEKGHLLKSGKELLKHLKEFKVEENSSYEIGKEITVTNFEVGQKVDISGKSMGRGFSGYQKRHGFSRGPMSHGSKNHRAPGSTGAGTTPGRIYPGKRMAGRYGGKKITTKGLLVVKIDDQKNLLVVKGSVPGKPGSIVNIRPNNTVGNKGGTKS</sequence>
<protein>
    <recommendedName>
        <fullName evidence="1">Large ribosomal subunit protein uL3</fullName>
    </recommendedName>
    <alternativeName>
        <fullName evidence="3">50S ribosomal protein L3</fullName>
    </alternativeName>
</protein>
<accession>A2BYT6</accession>
<evidence type="ECO:0000255" key="1">
    <source>
        <dbReference type="HAMAP-Rule" id="MF_01325"/>
    </source>
</evidence>
<evidence type="ECO:0000256" key="2">
    <source>
        <dbReference type="SAM" id="MobiDB-lite"/>
    </source>
</evidence>
<evidence type="ECO:0000305" key="3"/>
<dbReference type="EMBL" id="CP000552">
    <property type="protein sequence ID" value="ABM72947.1"/>
    <property type="molecule type" value="Genomic_DNA"/>
</dbReference>
<dbReference type="RefSeq" id="WP_011821037.1">
    <property type="nucleotide sequence ID" value="NC_008817.1"/>
</dbReference>
<dbReference type="SMR" id="A2BYT6"/>
<dbReference type="STRING" id="167542.P9515_17401"/>
<dbReference type="GeneID" id="60200987"/>
<dbReference type="KEGG" id="pmc:P9515_17401"/>
<dbReference type="eggNOG" id="COG0087">
    <property type="taxonomic scope" value="Bacteria"/>
</dbReference>
<dbReference type="HOGENOM" id="CLU_044142_4_1_3"/>
<dbReference type="OrthoDB" id="9806135at2"/>
<dbReference type="Proteomes" id="UP000001589">
    <property type="component" value="Chromosome"/>
</dbReference>
<dbReference type="GO" id="GO:0022625">
    <property type="term" value="C:cytosolic large ribosomal subunit"/>
    <property type="evidence" value="ECO:0007669"/>
    <property type="project" value="TreeGrafter"/>
</dbReference>
<dbReference type="GO" id="GO:0019843">
    <property type="term" value="F:rRNA binding"/>
    <property type="evidence" value="ECO:0007669"/>
    <property type="project" value="UniProtKB-UniRule"/>
</dbReference>
<dbReference type="GO" id="GO:0003735">
    <property type="term" value="F:structural constituent of ribosome"/>
    <property type="evidence" value="ECO:0007669"/>
    <property type="project" value="InterPro"/>
</dbReference>
<dbReference type="GO" id="GO:0006412">
    <property type="term" value="P:translation"/>
    <property type="evidence" value="ECO:0007669"/>
    <property type="project" value="UniProtKB-UniRule"/>
</dbReference>
<dbReference type="FunFam" id="3.30.160.810:FF:000001">
    <property type="entry name" value="50S ribosomal protein L3"/>
    <property type="match status" value="1"/>
</dbReference>
<dbReference type="FunFam" id="2.40.30.10:FF:000065">
    <property type="entry name" value="50S ribosomal protein L3, chloroplastic"/>
    <property type="match status" value="1"/>
</dbReference>
<dbReference type="Gene3D" id="3.30.160.810">
    <property type="match status" value="1"/>
</dbReference>
<dbReference type="Gene3D" id="2.40.30.10">
    <property type="entry name" value="Translation factors"/>
    <property type="match status" value="1"/>
</dbReference>
<dbReference type="HAMAP" id="MF_01325_B">
    <property type="entry name" value="Ribosomal_uL3_B"/>
    <property type="match status" value="1"/>
</dbReference>
<dbReference type="InterPro" id="IPR000597">
    <property type="entry name" value="Ribosomal_uL3"/>
</dbReference>
<dbReference type="InterPro" id="IPR019927">
    <property type="entry name" value="Ribosomal_uL3_bac/org-type"/>
</dbReference>
<dbReference type="InterPro" id="IPR019926">
    <property type="entry name" value="Ribosomal_uL3_CS"/>
</dbReference>
<dbReference type="InterPro" id="IPR009000">
    <property type="entry name" value="Transl_B-barrel_sf"/>
</dbReference>
<dbReference type="NCBIfam" id="TIGR03625">
    <property type="entry name" value="L3_bact"/>
    <property type="match status" value="1"/>
</dbReference>
<dbReference type="PANTHER" id="PTHR11229">
    <property type="entry name" value="50S RIBOSOMAL PROTEIN L3"/>
    <property type="match status" value="1"/>
</dbReference>
<dbReference type="PANTHER" id="PTHR11229:SF16">
    <property type="entry name" value="LARGE RIBOSOMAL SUBUNIT PROTEIN UL3C"/>
    <property type="match status" value="1"/>
</dbReference>
<dbReference type="Pfam" id="PF00297">
    <property type="entry name" value="Ribosomal_L3"/>
    <property type="match status" value="1"/>
</dbReference>
<dbReference type="SUPFAM" id="SSF50447">
    <property type="entry name" value="Translation proteins"/>
    <property type="match status" value="1"/>
</dbReference>
<dbReference type="PROSITE" id="PS00474">
    <property type="entry name" value="RIBOSOMAL_L3"/>
    <property type="match status" value="1"/>
</dbReference>
<keyword id="KW-0687">Ribonucleoprotein</keyword>
<keyword id="KW-0689">Ribosomal protein</keyword>
<keyword id="KW-0694">RNA-binding</keyword>
<keyword id="KW-0699">rRNA-binding</keyword>
<name>RL3_PROM5</name>